<dbReference type="EC" id="2.4.99.17" evidence="1"/>
<dbReference type="EMBL" id="AP009384">
    <property type="protein sequence ID" value="BAF88306.1"/>
    <property type="molecule type" value="Genomic_DNA"/>
</dbReference>
<dbReference type="RefSeq" id="WP_012170835.1">
    <property type="nucleotide sequence ID" value="NC_009937.1"/>
</dbReference>
<dbReference type="SMR" id="A8I5Q2"/>
<dbReference type="STRING" id="438753.AZC_2308"/>
<dbReference type="KEGG" id="azc:AZC_2308"/>
<dbReference type="eggNOG" id="COG0809">
    <property type="taxonomic scope" value="Bacteria"/>
</dbReference>
<dbReference type="HOGENOM" id="CLU_039110_1_1_5"/>
<dbReference type="UniPathway" id="UPA00392"/>
<dbReference type="Proteomes" id="UP000000270">
    <property type="component" value="Chromosome"/>
</dbReference>
<dbReference type="GO" id="GO:0005737">
    <property type="term" value="C:cytoplasm"/>
    <property type="evidence" value="ECO:0007669"/>
    <property type="project" value="UniProtKB-SubCell"/>
</dbReference>
<dbReference type="GO" id="GO:0051075">
    <property type="term" value="F:S-adenosylmethionine:tRNA ribosyltransferase-isomerase activity"/>
    <property type="evidence" value="ECO:0007669"/>
    <property type="project" value="UniProtKB-EC"/>
</dbReference>
<dbReference type="GO" id="GO:0008616">
    <property type="term" value="P:queuosine biosynthetic process"/>
    <property type="evidence" value="ECO:0007669"/>
    <property type="project" value="UniProtKB-UniRule"/>
</dbReference>
<dbReference type="GO" id="GO:0002099">
    <property type="term" value="P:tRNA wobble guanine modification"/>
    <property type="evidence" value="ECO:0007669"/>
    <property type="project" value="TreeGrafter"/>
</dbReference>
<dbReference type="Gene3D" id="2.40.10.240">
    <property type="entry name" value="QueA-like"/>
    <property type="match status" value="1"/>
</dbReference>
<dbReference type="Gene3D" id="3.40.1780.10">
    <property type="entry name" value="QueA-like"/>
    <property type="match status" value="1"/>
</dbReference>
<dbReference type="HAMAP" id="MF_00113">
    <property type="entry name" value="QueA"/>
    <property type="match status" value="1"/>
</dbReference>
<dbReference type="InterPro" id="IPR003699">
    <property type="entry name" value="QueA"/>
</dbReference>
<dbReference type="InterPro" id="IPR042118">
    <property type="entry name" value="QueA_dom1"/>
</dbReference>
<dbReference type="InterPro" id="IPR042119">
    <property type="entry name" value="QueA_dom2"/>
</dbReference>
<dbReference type="InterPro" id="IPR036100">
    <property type="entry name" value="QueA_sf"/>
</dbReference>
<dbReference type="NCBIfam" id="NF001140">
    <property type="entry name" value="PRK00147.1"/>
    <property type="match status" value="1"/>
</dbReference>
<dbReference type="NCBIfam" id="TIGR00113">
    <property type="entry name" value="queA"/>
    <property type="match status" value="1"/>
</dbReference>
<dbReference type="PANTHER" id="PTHR30307">
    <property type="entry name" value="S-ADENOSYLMETHIONINE:TRNA RIBOSYLTRANSFERASE-ISOMERASE"/>
    <property type="match status" value="1"/>
</dbReference>
<dbReference type="PANTHER" id="PTHR30307:SF0">
    <property type="entry name" value="S-ADENOSYLMETHIONINE:TRNA RIBOSYLTRANSFERASE-ISOMERASE"/>
    <property type="match status" value="1"/>
</dbReference>
<dbReference type="Pfam" id="PF02547">
    <property type="entry name" value="Queuosine_synth"/>
    <property type="match status" value="1"/>
</dbReference>
<dbReference type="SUPFAM" id="SSF111337">
    <property type="entry name" value="QueA-like"/>
    <property type="match status" value="1"/>
</dbReference>
<sequence length="354" mass="38051">MRVDAFDFDLPPERIALRPAEPRESARLLRVRPGAAPELEDRTIADLPDLLQPGDALVVNDTKVIPARLDGTRTRAGGSTVAIEATLIRRLSGSAWAAFAKPAKRLAVGETVVFAGASGGTLEARVLDKLESGEVHFAFALSGPELDAAIDAIGHMPLPPYIAAKRPEDDRDRTDYQPVFARVEGSVAAPTASLHFTPDLLAKIAARGVSRYTVTLHVGAGTFLPVKAEDTTDHQMHAEWGEVSPETAAELNAVKARGGRIITVGSTATRLIETAATPEGSIRPYLGETDIFITPGYAFRASDVMLTNFHLPRSTLVMLVAAFVGHETQKRAYAHAIASGYRFYSYGDACLLER</sequence>
<accession>A8I5Q2</accession>
<comment type="function">
    <text evidence="1">Transfers and isomerizes the ribose moiety from AdoMet to the 7-aminomethyl group of 7-deazaguanine (preQ1-tRNA) to give epoxyqueuosine (oQ-tRNA).</text>
</comment>
<comment type="catalytic activity">
    <reaction evidence="1">
        <text>7-aminomethyl-7-carbaguanosine(34) in tRNA + S-adenosyl-L-methionine = epoxyqueuosine(34) in tRNA + adenine + L-methionine + 2 H(+)</text>
        <dbReference type="Rhea" id="RHEA:32155"/>
        <dbReference type="Rhea" id="RHEA-COMP:10342"/>
        <dbReference type="Rhea" id="RHEA-COMP:18582"/>
        <dbReference type="ChEBI" id="CHEBI:15378"/>
        <dbReference type="ChEBI" id="CHEBI:16708"/>
        <dbReference type="ChEBI" id="CHEBI:57844"/>
        <dbReference type="ChEBI" id="CHEBI:59789"/>
        <dbReference type="ChEBI" id="CHEBI:82833"/>
        <dbReference type="ChEBI" id="CHEBI:194443"/>
        <dbReference type="EC" id="2.4.99.17"/>
    </reaction>
</comment>
<comment type="pathway">
    <text evidence="1">tRNA modification; tRNA-queuosine biosynthesis.</text>
</comment>
<comment type="subunit">
    <text evidence="1">Monomer.</text>
</comment>
<comment type="subcellular location">
    <subcellularLocation>
        <location evidence="1">Cytoplasm</location>
    </subcellularLocation>
</comment>
<comment type="similarity">
    <text evidence="1">Belongs to the QueA family.</text>
</comment>
<reference key="1">
    <citation type="submission" date="2007-04" db="EMBL/GenBank/DDBJ databases">
        <title>Complete genome sequence of the nitrogen-fixing bacterium Azorhizobium caulinodans ORS571.</title>
        <authorList>
            <person name="Lee K.B."/>
            <person name="Backer P.D."/>
            <person name="Aono T."/>
            <person name="Liu C.T."/>
            <person name="Suzuki S."/>
            <person name="Suzuki T."/>
            <person name="Kaneko T."/>
            <person name="Yamada M."/>
            <person name="Tabata S."/>
            <person name="Kupfer D.M."/>
            <person name="Najar F.Z."/>
            <person name="Wiley G.B."/>
            <person name="Roe B."/>
            <person name="Binnewies T."/>
            <person name="Ussery D."/>
            <person name="Vereecke D."/>
            <person name="Gevers D."/>
            <person name="Holsters M."/>
            <person name="Oyaizu H."/>
        </authorList>
    </citation>
    <scope>NUCLEOTIDE SEQUENCE [LARGE SCALE GENOMIC DNA]</scope>
    <source>
        <strain>ATCC 43989 / DSM 5975 / JCM 20966 / LMG 6465 / NBRC 14845 / NCIMB 13405 / ORS 571</strain>
    </source>
</reference>
<gene>
    <name evidence="1" type="primary">queA</name>
    <name type="ordered locus">AZC_2308</name>
</gene>
<proteinExistence type="inferred from homology"/>
<keyword id="KW-0963">Cytoplasm</keyword>
<keyword id="KW-0671">Queuosine biosynthesis</keyword>
<keyword id="KW-1185">Reference proteome</keyword>
<keyword id="KW-0949">S-adenosyl-L-methionine</keyword>
<keyword id="KW-0808">Transferase</keyword>
<name>QUEA_AZOC5</name>
<protein>
    <recommendedName>
        <fullName evidence="1">S-adenosylmethionine:tRNA ribosyltransferase-isomerase</fullName>
        <ecNumber evidence="1">2.4.99.17</ecNumber>
    </recommendedName>
    <alternativeName>
        <fullName evidence="1">Queuosine biosynthesis protein QueA</fullName>
    </alternativeName>
</protein>
<evidence type="ECO:0000255" key="1">
    <source>
        <dbReference type="HAMAP-Rule" id="MF_00113"/>
    </source>
</evidence>
<organism>
    <name type="scientific">Azorhizobium caulinodans (strain ATCC 43989 / DSM 5975 / JCM 20966 / LMG 6465 / NBRC 14845 / NCIMB 13405 / ORS 571)</name>
    <dbReference type="NCBI Taxonomy" id="438753"/>
    <lineage>
        <taxon>Bacteria</taxon>
        <taxon>Pseudomonadati</taxon>
        <taxon>Pseudomonadota</taxon>
        <taxon>Alphaproteobacteria</taxon>
        <taxon>Hyphomicrobiales</taxon>
        <taxon>Xanthobacteraceae</taxon>
        <taxon>Azorhizobium</taxon>
    </lineage>
</organism>
<feature type="chain" id="PRO_1000071335" description="S-adenosylmethionine:tRNA ribosyltransferase-isomerase">
    <location>
        <begin position="1"/>
        <end position="354"/>
    </location>
</feature>